<protein>
    <recommendedName>
        <fullName evidence="3">C6 finger domain transcription factor aclZ</fullName>
    </recommendedName>
    <alternativeName>
        <fullName evidence="3">Aspirochlorine biosynthesis protein Z</fullName>
    </alternativeName>
</protein>
<dbReference type="EMBL" id="BA000050">
    <property type="protein sequence ID" value="BAE56592.1"/>
    <property type="molecule type" value="Genomic_DNA"/>
</dbReference>
<dbReference type="SMR" id="Q2UPC3"/>
<dbReference type="STRING" id="510516.Q2UPC3"/>
<dbReference type="EnsemblFungi" id="BAE56592">
    <property type="protein sequence ID" value="BAE56592"/>
    <property type="gene ID" value="AO090001000029"/>
</dbReference>
<dbReference type="HOGENOM" id="CLU_050742_0_0_1"/>
<dbReference type="Proteomes" id="UP000006564">
    <property type="component" value="Chromosome 2"/>
</dbReference>
<dbReference type="GO" id="GO:0005634">
    <property type="term" value="C:nucleus"/>
    <property type="evidence" value="ECO:0007669"/>
    <property type="project" value="UniProtKB-SubCell"/>
</dbReference>
<dbReference type="GO" id="GO:0000981">
    <property type="term" value="F:DNA-binding transcription factor activity, RNA polymerase II-specific"/>
    <property type="evidence" value="ECO:0007669"/>
    <property type="project" value="InterPro"/>
</dbReference>
<dbReference type="GO" id="GO:0043565">
    <property type="term" value="F:sequence-specific DNA binding"/>
    <property type="evidence" value="ECO:0007669"/>
    <property type="project" value="TreeGrafter"/>
</dbReference>
<dbReference type="GO" id="GO:0008270">
    <property type="term" value="F:zinc ion binding"/>
    <property type="evidence" value="ECO:0007669"/>
    <property type="project" value="InterPro"/>
</dbReference>
<dbReference type="GO" id="GO:0045944">
    <property type="term" value="P:positive regulation of transcription by RNA polymerase II"/>
    <property type="evidence" value="ECO:0007669"/>
    <property type="project" value="TreeGrafter"/>
</dbReference>
<dbReference type="CDD" id="cd00067">
    <property type="entry name" value="GAL4"/>
    <property type="match status" value="1"/>
</dbReference>
<dbReference type="Gene3D" id="4.10.240.10">
    <property type="entry name" value="Zn(2)-C6 fungal-type DNA-binding domain"/>
    <property type="match status" value="1"/>
</dbReference>
<dbReference type="InterPro" id="IPR051711">
    <property type="entry name" value="Stress_Response_Reg"/>
</dbReference>
<dbReference type="InterPro" id="IPR036864">
    <property type="entry name" value="Zn2-C6_fun-type_DNA-bd_sf"/>
</dbReference>
<dbReference type="InterPro" id="IPR001138">
    <property type="entry name" value="Zn2Cys6_DnaBD"/>
</dbReference>
<dbReference type="PANTHER" id="PTHR47540">
    <property type="entry name" value="THIAMINE REPRESSIBLE GENES REGULATORY PROTEIN THI5"/>
    <property type="match status" value="1"/>
</dbReference>
<dbReference type="PANTHER" id="PTHR47540:SF2">
    <property type="entry name" value="ZN(II)2CYS6 TRANSCRIPTION FACTOR (EUROFUNG)"/>
    <property type="match status" value="1"/>
</dbReference>
<dbReference type="Pfam" id="PF00172">
    <property type="entry name" value="Zn_clus"/>
    <property type="match status" value="1"/>
</dbReference>
<dbReference type="SMART" id="SM00066">
    <property type="entry name" value="GAL4"/>
    <property type="match status" value="1"/>
</dbReference>
<dbReference type="SUPFAM" id="SSF57701">
    <property type="entry name" value="Zn2/Cys6 DNA-binding domain"/>
    <property type="match status" value="1"/>
</dbReference>
<dbReference type="PROSITE" id="PS00463">
    <property type="entry name" value="ZN2_CY6_FUNGAL_1"/>
    <property type="match status" value="1"/>
</dbReference>
<dbReference type="PROSITE" id="PS50048">
    <property type="entry name" value="ZN2_CY6_FUNGAL_2"/>
    <property type="match status" value="1"/>
</dbReference>
<organism>
    <name type="scientific">Aspergillus oryzae (strain ATCC 42149 / RIB 40)</name>
    <name type="common">Yellow koji mold</name>
    <dbReference type="NCBI Taxonomy" id="510516"/>
    <lineage>
        <taxon>Eukaryota</taxon>
        <taxon>Fungi</taxon>
        <taxon>Dikarya</taxon>
        <taxon>Ascomycota</taxon>
        <taxon>Pezizomycotina</taxon>
        <taxon>Eurotiomycetes</taxon>
        <taxon>Eurotiomycetidae</taxon>
        <taxon>Eurotiales</taxon>
        <taxon>Aspergillaceae</taxon>
        <taxon>Aspergillus</taxon>
        <taxon>Aspergillus subgen. Circumdati</taxon>
    </lineage>
</organism>
<accession>Q2UPC3</accession>
<sequence>MSFIPVEHIACSTAKLPSSRCPLLLLQPNGSSTKPVRWRSACNQCHAAKVRCSGERTGCDRCNNLQYQCVYAISRVGKVPGVRARGNKAVRTTTEALQRPATASTLPDADSTGEFQTDQRSENDPLSRSDFGEQDAAHDALSPKSHSALFPDWTEASDKSLNAYETADLFILPSQLMSSDQDPSRSRGHSLQAPSHSGHSIADSHTAAMPDGGLFCPFNKPTTPIPALPDLDLHIQDFHPMDVPVSPLDNGPPVKRRPYSDASCGHSGHSSKGYMSSTFPYSELLSQIGCQTDCGRQPHHYNYRSWTVLICNRIVEFLEHRIQGGVVALDVVMQTNKVTLGEISRILSKGAHKEGSNCAMLLLIAIDQIVTLFECGVKQGSPGDSDRASIGGRDLSALGDDLTGGNVLPNLRFGLFQINQDEQLALRSYLLQRELQRCLQVLTNLRDAIPLEPNPCTALEARVKKLCSAIADSH</sequence>
<keyword id="KW-0238">DNA-binding</keyword>
<keyword id="KW-0479">Metal-binding</keyword>
<keyword id="KW-0539">Nucleus</keyword>
<keyword id="KW-1185">Reference proteome</keyword>
<keyword id="KW-0804">Transcription</keyword>
<keyword id="KW-0805">Transcription regulation</keyword>
<keyword id="KW-0862">Zinc</keyword>
<feature type="chain" id="PRO_0000441211" description="C6 finger domain transcription factor aclZ">
    <location>
        <begin position="1"/>
        <end position="474"/>
    </location>
</feature>
<feature type="DNA-binding region" description="Zn(2)-C6 fungal-type" evidence="1">
    <location>
        <begin position="42"/>
        <end position="69"/>
    </location>
</feature>
<feature type="region of interest" description="Disordered" evidence="2">
    <location>
        <begin position="85"/>
        <end position="148"/>
    </location>
</feature>
<feature type="region of interest" description="Disordered" evidence="2">
    <location>
        <begin position="177"/>
        <end position="206"/>
    </location>
</feature>
<feature type="compositionally biased region" description="Polar residues" evidence="2">
    <location>
        <begin position="90"/>
        <end position="105"/>
    </location>
</feature>
<feature type="compositionally biased region" description="Basic and acidic residues" evidence="2">
    <location>
        <begin position="117"/>
        <end position="138"/>
    </location>
</feature>
<comment type="function">
    <text evidence="4">Transcription factor that specifically regulates the gene cluster that mediates the biosynthesis of aspirochlorine (or antibiotic A30641), an unusual halogenated spiro compound with distinctive antifungal properties due to selective inhibition of protein biosynthesis, and which is also active against bacteria, viruses, and murine tumor cells (PubMed:25302411).</text>
</comment>
<comment type="subcellular location">
    <subcellularLocation>
        <location evidence="1">Nucleus</location>
    </subcellularLocation>
</comment>
<name>ACLZ_ASPOR</name>
<reference key="1">
    <citation type="journal article" date="2005" name="Nature">
        <title>Genome sequencing and analysis of Aspergillus oryzae.</title>
        <authorList>
            <person name="Machida M."/>
            <person name="Asai K."/>
            <person name="Sano M."/>
            <person name="Tanaka T."/>
            <person name="Kumagai T."/>
            <person name="Terai G."/>
            <person name="Kusumoto K."/>
            <person name="Arima T."/>
            <person name="Akita O."/>
            <person name="Kashiwagi Y."/>
            <person name="Abe K."/>
            <person name="Gomi K."/>
            <person name="Horiuchi H."/>
            <person name="Kitamoto K."/>
            <person name="Kobayashi T."/>
            <person name="Takeuchi M."/>
            <person name="Denning D.W."/>
            <person name="Galagan J.E."/>
            <person name="Nierman W.C."/>
            <person name="Yu J."/>
            <person name="Archer D.B."/>
            <person name="Bennett J.W."/>
            <person name="Bhatnagar D."/>
            <person name="Cleveland T.E."/>
            <person name="Fedorova N.D."/>
            <person name="Gotoh O."/>
            <person name="Horikawa H."/>
            <person name="Hosoyama A."/>
            <person name="Ichinomiya M."/>
            <person name="Igarashi R."/>
            <person name="Iwashita K."/>
            <person name="Juvvadi P.R."/>
            <person name="Kato M."/>
            <person name="Kato Y."/>
            <person name="Kin T."/>
            <person name="Kokubun A."/>
            <person name="Maeda H."/>
            <person name="Maeyama N."/>
            <person name="Maruyama J."/>
            <person name="Nagasaki H."/>
            <person name="Nakajima T."/>
            <person name="Oda K."/>
            <person name="Okada K."/>
            <person name="Paulsen I."/>
            <person name="Sakamoto K."/>
            <person name="Sawano T."/>
            <person name="Takahashi M."/>
            <person name="Takase K."/>
            <person name="Terabayashi Y."/>
            <person name="Wortman J.R."/>
            <person name="Yamada O."/>
            <person name="Yamagata Y."/>
            <person name="Anazawa H."/>
            <person name="Hata Y."/>
            <person name="Koide Y."/>
            <person name="Komori T."/>
            <person name="Koyama Y."/>
            <person name="Minetoki T."/>
            <person name="Suharnan S."/>
            <person name="Tanaka A."/>
            <person name="Isono K."/>
            <person name="Kuhara S."/>
            <person name="Ogasawara N."/>
            <person name="Kikuchi H."/>
        </authorList>
    </citation>
    <scope>NUCLEOTIDE SEQUENCE [LARGE SCALE GENOMIC DNA]</scope>
    <source>
        <strain>ATCC 42149 / RIB 40</strain>
    </source>
</reference>
<reference key="2">
    <citation type="journal article" date="2014" name="Angew. Chem. Int. Ed.">
        <title>Biosynthesis of the halogenated mycotoxin aspirochlorine in koji mold involves a cryptic amino acid conversion.</title>
        <authorList>
            <person name="Chankhamjon P."/>
            <person name="Boettger-Schmidt D."/>
            <person name="Scherlach K."/>
            <person name="Urbansky B."/>
            <person name="Lackner G."/>
            <person name="Kalb D."/>
            <person name="Dahse H.M."/>
            <person name="Hoffmeister D."/>
            <person name="Hertweck C."/>
        </authorList>
    </citation>
    <scope>FUNCTION</scope>
</reference>
<gene>
    <name evidence="3" type="primary">aclZ</name>
    <name type="ORF">AO090001000029</name>
</gene>
<evidence type="ECO:0000255" key="1">
    <source>
        <dbReference type="PROSITE-ProRule" id="PRU00227"/>
    </source>
</evidence>
<evidence type="ECO:0000256" key="2">
    <source>
        <dbReference type="SAM" id="MobiDB-lite"/>
    </source>
</evidence>
<evidence type="ECO:0000303" key="3">
    <source>
    </source>
</evidence>
<evidence type="ECO:0000305" key="4">
    <source>
    </source>
</evidence>
<proteinExistence type="inferred from homology"/>